<feature type="chain" id="PRO_0000199545" description="Endogenous retrovirus group K member 24 Pro protein">
    <location>
        <begin position="1"/>
        <end position="156"/>
    </location>
</feature>
<feature type="domain" description="Peptidase A2" evidence="3">
    <location>
        <begin position="21"/>
        <end position="96"/>
    </location>
</feature>
<feature type="domain" description="G-patch" evidence="2">
    <location>
        <begin position="111"/>
        <end position="156"/>
    </location>
</feature>
<feature type="active site" evidence="4">
    <location>
        <position position="26"/>
    </location>
</feature>
<feature type="sequence conflict" description="In Ref. 2." evidence="5" ref="2">
    <location>
        <begin position="94"/>
        <end position="156"/>
    </location>
</feature>
<protein>
    <recommendedName>
        <fullName>Endogenous retrovirus group K member 24 Pro protein</fullName>
    </recommendedName>
    <alternativeName>
        <fullName>HERV-K101 envelope protein</fullName>
    </alternativeName>
    <alternativeName>
        <fullName>HERV-K_22q11.21 provirus ancestral Pro protein</fullName>
        <ecNumber>3.4.23.50</ecNumber>
    </alternativeName>
    <alternativeName>
        <fullName>Protease</fullName>
    </alternativeName>
    <alternativeName>
        <fullName>Proteinase</fullName>
        <shortName>PR</shortName>
    </alternativeName>
</protein>
<keyword id="KW-0064">Aspartyl protease</keyword>
<keyword id="KW-0068">Autocatalytic cleavage</keyword>
<keyword id="KW-0895">ERV</keyword>
<keyword id="KW-0378">Hydrolase</keyword>
<keyword id="KW-0645">Protease</keyword>
<keyword id="KW-1185">Reference proteome</keyword>
<keyword id="KW-0688">Ribosomal frameshifting</keyword>
<keyword id="KW-0814">Transposable element</keyword>
<evidence type="ECO:0000250" key="1"/>
<evidence type="ECO:0000255" key="2">
    <source>
        <dbReference type="PROSITE-ProRule" id="PRU00092"/>
    </source>
</evidence>
<evidence type="ECO:0000255" key="3">
    <source>
        <dbReference type="PROSITE-ProRule" id="PRU00275"/>
    </source>
</evidence>
<evidence type="ECO:0000255" key="4">
    <source>
        <dbReference type="PROSITE-ProRule" id="PRU10094"/>
    </source>
</evidence>
<evidence type="ECO:0000305" key="5"/>
<organism>
    <name type="scientific">Homo sapiens</name>
    <name type="common">Human</name>
    <dbReference type="NCBI Taxonomy" id="9606"/>
    <lineage>
        <taxon>Eukaryota</taxon>
        <taxon>Metazoa</taxon>
        <taxon>Chordata</taxon>
        <taxon>Craniata</taxon>
        <taxon>Vertebrata</taxon>
        <taxon>Euteleostomi</taxon>
        <taxon>Mammalia</taxon>
        <taxon>Eutheria</taxon>
        <taxon>Euarchontoglires</taxon>
        <taxon>Primates</taxon>
        <taxon>Haplorrhini</taxon>
        <taxon>Catarrhini</taxon>
        <taxon>Hominidae</taxon>
        <taxon>Homo</taxon>
    </lineage>
</organism>
<name>VPK24_HUMAN</name>
<dbReference type="EC" id="3.4.23.50"/>
<dbReference type="EMBL" id="AF164609">
    <property type="protein sequence ID" value="AAD51791.1"/>
    <property type="status" value="ALT_SEQ"/>
    <property type="molecule type" value="Genomic_DNA"/>
</dbReference>
<dbReference type="EMBL" id="AC007326">
    <property type="status" value="NOT_ANNOTATED_CDS"/>
    <property type="molecule type" value="Genomic_DNA"/>
</dbReference>
<dbReference type="SMR" id="P63129"/>
<dbReference type="MEROPS" id="A02.011"/>
<dbReference type="iPTMnet" id="P63129"/>
<dbReference type="PhosphoSitePlus" id="P63129"/>
<dbReference type="BioMuta" id="HGNC:39038"/>
<dbReference type="DMDM" id="52000858"/>
<dbReference type="GeneCards" id="ERVK-24"/>
<dbReference type="HGNC" id="HGNC:39038">
    <property type="gene designation" value="ERVK-24"/>
</dbReference>
<dbReference type="neXtProt" id="NX_P63129"/>
<dbReference type="PhylomeDB" id="P63129"/>
<dbReference type="Pharos" id="P63129">
    <property type="development level" value="Tdark"/>
</dbReference>
<dbReference type="Proteomes" id="UP000005640">
    <property type="component" value="Unplaced"/>
</dbReference>
<dbReference type="GO" id="GO:0004190">
    <property type="term" value="F:aspartic-type endopeptidase activity"/>
    <property type="evidence" value="ECO:0007669"/>
    <property type="project" value="UniProtKB-KW"/>
</dbReference>
<dbReference type="GO" id="GO:0003676">
    <property type="term" value="F:nucleic acid binding"/>
    <property type="evidence" value="ECO:0007669"/>
    <property type="project" value="InterPro"/>
</dbReference>
<dbReference type="GO" id="GO:0006508">
    <property type="term" value="P:proteolysis"/>
    <property type="evidence" value="ECO:0007669"/>
    <property type="project" value="UniProtKB-KW"/>
</dbReference>
<dbReference type="GO" id="GO:0075523">
    <property type="term" value="P:viral translational frameshifting"/>
    <property type="evidence" value="ECO:0007669"/>
    <property type="project" value="UniProtKB-KW"/>
</dbReference>
<dbReference type="CDD" id="cd05482">
    <property type="entry name" value="HIV_retropepsin_like"/>
    <property type="match status" value="1"/>
</dbReference>
<dbReference type="Gene3D" id="2.40.70.10">
    <property type="entry name" value="Acid Proteases"/>
    <property type="match status" value="1"/>
</dbReference>
<dbReference type="InterPro" id="IPR001969">
    <property type="entry name" value="Aspartic_peptidase_AS"/>
</dbReference>
<dbReference type="InterPro" id="IPR000467">
    <property type="entry name" value="G_patch_dom"/>
</dbReference>
<dbReference type="InterPro" id="IPR051592">
    <property type="entry name" value="HERV-K_Pro_peptidase_A2"/>
</dbReference>
<dbReference type="InterPro" id="IPR001995">
    <property type="entry name" value="Peptidase_A2_cat"/>
</dbReference>
<dbReference type="InterPro" id="IPR021109">
    <property type="entry name" value="Peptidase_aspartic_dom_sf"/>
</dbReference>
<dbReference type="InterPro" id="IPR034170">
    <property type="entry name" value="Retropepsin-like_cat_dom"/>
</dbReference>
<dbReference type="InterPro" id="IPR018061">
    <property type="entry name" value="Retropepsins"/>
</dbReference>
<dbReference type="PANTHER" id="PTHR19422">
    <property type="entry name" value="GAG RETROVIRAL POLYPROTEIN"/>
    <property type="match status" value="1"/>
</dbReference>
<dbReference type="PANTHER" id="PTHR19422:SF123">
    <property type="entry name" value="RT1 CLASS I, LOCUS CE15"/>
    <property type="match status" value="1"/>
</dbReference>
<dbReference type="Pfam" id="PF01585">
    <property type="entry name" value="G-patch"/>
    <property type="match status" value="1"/>
</dbReference>
<dbReference type="Pfam" id="PF00077">
    <property type="entry name" value="RVP"/>
    <property type="match status" value="1"/>
</dbReference>
<dbReference type="SMART" id="SM00443">
    <property type="entry name" value="G_patch"/>
    <property type="match status" value="1"/>
</dbReference>
<dbReference type="SUPFAM" id="SSF50630">
    <property type="entry name" value="Acid proteases"/>
    <property type="match status" value="1"/>
</dbReference>
<dbReference type="PROSITE" id="PS50175">
    <property type="entry name" value="ASP_PROT_RETROV"/>
    <property type="match status" value="1"/>
</dbReference>
<dbReference type="PROSITE" id="PS00141">
    <property type="entry name" value="ASP_PROTEASE"/>
    <property type="match status" value="1"/>
</dbReference>
<dbReference type="PROSITE" id="PS50174">
    <property type="entry name" value="G_PATCH"/>
    <property type="match status" value="1"/>
</dbReference>
<proteinExistence type="inferred from homology"/>
<comment type="function">
    <text>Retroviral proteases have roles in processing of the primary translation products and the maturation of the viral particle. Endogenous Pro proteins may have kept, lost or modified their original function during evolution. This endogenous protein has retained most of the characteristics of retroviral proteases.</text>
</comment>
<comment type="catalytic activity">
    <reaction>
        <text>Processing at the authentic HIV-1 PR recognition site and release of the mature p17 matrix and the p24 capsid protein, as a result of the cleavage of the -SQNY-|-PIVQ- cleavage site.</text>
        <dbReference type="EC" id="3.4.23.50"/>
    </reaction>
</comment>
<comment type="subunit">
    <text evidence="1">Active as a homodimer.</text>
</comment>
<comment type="alternative products">
    <event type="ribosomal frameshifting"/>
    <isoform>
        <id>P63129-1</id>
        <name>1</name>
        <sequence type="displayed"/>
    </isoform>
    <text>This protein is synthesized as Gag-Pro and Gag-Pro-Pol polyprotein. These polyproteins are thought, by similarity with type-B retroviruses, to be generated by -1 frameshifts occurring at the Gag-Pro and Pro-Pol genes boundaries.</text>
</comment>
<comment type="PTM">
    <text evidence="1">Autoproteolytically processed at the N-terminus. Expected C-terminal autoprocessing not detected. The sequence shown is that of the processed Pro protein (By similarity).</text>
</comment>
<comment type="similarity">
    <text evidence="5">Belongs to the peptidase A2 family. HERV class-II K(HML-2) subfamily.</text>
</comment>
<gene>
    <name type="primary">ERVK-24</name>
</gene>
<reference key="1">
    <citation type="journal article" date="1999" name="Curr. Biol.">
        <title>Many human endogenous retrovirus K (HERV-K) proviruses are unique to humans.</title>
        <authorList>
            <person name="Barbulescu M."/>
            <person name="Turner G."/>
            <person name="Seaman M.I."/>
            <person name="Deinard A.S."/>
            <person name="Kidd K.K."/>
            <person name="Lenz J."/>
        </authorList>
    </citation>
    <scope>NUCLEOTIDE SEQUENCE [GENOMIC DNA]</scope>
</reference>
<reference key="2">
    <citation type="journal article" date="1999" name="Nature">
        <title>The DNA sequence of human chromosome 22.</title>
        <authorList>
            <person name="Dunham I."/>
            <person name="Hunt A.R."/>
            <person name="Collins J.E."/>
            <person name="Bruskiewich R."/>
            <person name="Beare D.M."/>
            <person name="Clamp M."/>
            <person name="Smink L.J."/>
            <person name="Ainscough R."/>
            <person name="Almeida J.P."/>
            <person name="Babbage A.K."/>
            <person name="Bagguley C."/>
            <person name="Bailey J."/>
            <person name="Barlow K.F."/>
            <person name="Bates K.N."/>
            <person name="Beasley O.P."/>
            <person name="Bird C.P."/>
            <person name="Blakey S.E."/>
            <person name="Bridgeman A.M."/>
            <person name="Buck D."/>
            <person name="Burgess J."/>
            <person name="Burrill W.D."/>
            <person name="Burton J."/>
            <person name="Carder C."/>
            <person name="Carter N.P."/>
            <person name="Chen Y."/>
            <person name="Clark G."/>
            <person name="Clegg S.M."/>
            <person name="Cobley V.E."/>
            <person name="Cole C.G."/>
            <person name="Collier R.E."/>
            <person name="Connor R."/>
            <person name="Conroy D."/>
            <person name="Corby N.R."/>
            <person name="Coville G.J."/>
            <person name="Cox A.V."/>
            <person name="Davis J."/>
            <person name="Dawson E."/>
            <person name="Dhami P.D."/>
            <person name="Dockree C."/>
            <person name="Dodsworth S.J."/>
            <person name="Durbin R.M."/>
            <person name="Ellington A.G."/>
            <person name="Evans K.L."/>
            <person name="Fey J.M."/>
            <person name="Fleming K."/>
            <person name="French L."/>
            <person name="Garner A.A."/>
            <person name="Gilbert J.G.R."/>
            <person name="Goward M.E."/>
            <person name="Grafham D.V."/>
            <person name="Griffiths M.N.D."/>
            <person name="Hall C."/>
            <person name="Hall R.E."/>
            <person name="Hall-Tamlyn G."/>
            <person name="Heathcott R.W."/>
            <person name="Ho S."/>
            <person name="Holmes S."/>
            <person name="Hunt S.E."/>
            <person name="Jones M.C."/>
            <person name="Kershaw J."/>
            <person name="Kimberley A.M."/>
            <person name="King A."/>
            <person name="Laird G.K."/>
            <person name="Langford C.F."/>
            <person name="Leversha M.A."/>
            <person name="Lloyd C."/>
            <person name="Lloyd D.M."/>
            <person name="Martyn I.D."/>
            <person name="Mashreghi-Mohammadi M."/>
            <person name="Matthews L.H."/>
            <person name="Mccann O.T."/>
            <person name="Mcclay J."/>
            <person name="Mclaren S."/>
            <person name="McMurray A.A."/>
            <person name="Milne S.A."/>
            <person name="Mortimore B.J."/>
            <person name="Odell C.N."/>
            <person name="Pavitt R."/>
            <person name="Pearce A.V."/>
            <person name="Pearson D."/>
            <person name="Phillimore B.J.C.T."/>
            <person name="Phillips S.H."/>
            <person name="Plumb R.W."/>
            <person name="Ramsay H."/>
            <person name="Ramsey Y."/>
            <person name="Rogers L."/>
            <person name="Ross M.T."/>
            <person name="Scott C.E."/>
            <person name="Sehra H.K."/>
            <person name="Skuce C.D."/>
            <person name="Smalley S."/>
            <person name="Smith M.L."/>
            <person name="Soderlund C."/>
            <person name="Spragon L."/>
            <person name="Steward C.A."/>
            <person name="Sulston J.E."/>
            <person name="Swann R.M."/>
            <person name="Vaudin M."/>
            <person name="Wall M."/>
            <person name="Wallis J.M."/>
            <person name="Whiteley M.N."/>
            <person name="Willey D.L."/>
            <person name="Williams L."/>
            <person name="Williams S.A."/>
            <person name="Williamson H."/>
            <person name="Wilmer T.E."/>
            <person name="Wilming L."/>
            <person name="Wright C.L."/>
            <person name="Hubbard T."/>
            <person name="Bentley D.R."/>
            <person name="Beck S."/>
            <person name="Rogers J."/>
            <person name="Shimizu N."/>
            <person name="Minoshima S."/>
            <person name="Kawasaki K."/>
            <person name="Sasaki T."/>
            <person name="Asakawa S."/>
            <person name="Kudoh J."/>
            <person name="Shintani A."/>
            <person name="Shibuya K."/>
            <person name="Yoshizaki Y."/>
            <person name="Aoki N."/>
            <person name="Mitsuyama S."/>
            <person name="Roe B.A."/>
            <person name="Chen F."/>
            <person name="Chu L."/>
            <person name="Crabtree J."/>
            <person name="Deschamps S."/>
            <person name="Do A."/>
            <person name="Do T."/>
            <person name="Dorman A."/>
            <person name="Fang F."/>
            <person name="Fu Y."/>
            <person name="Hu P."/>
            <person name="Hua A."/>
            <person name="Kenton S."/>
            <person name="Lai H."/>
            <person name="Lao H.I."/>
            <person name="Lewis J."/>
            <person name="Lewis S."/>
            <person name="Lin S.-P."/>
            <person name="Loh P."/>
            <person name="Malaj E."/>
            <person name="Nguyen T."/>
            <person name="Pan H."/>
            <person name="Phan S."/>
            <person name="Qi S."/>
            <person name="Qian Y."/>
            <person name="Ray L."/>
            <person name="Ren Q."/>
            <person name="Shaull S."/>
            <person name="Sloan D."/>
            <person name="Song L."/>
            <person name="Wang Q."/>
            <person name="Wang Y."/>
            <person name="Wang Z."/>
            <person name="White J."/>
            <person name="Willingham D."/>
            <person name="Wu H."/>
            <person name="Yao Z."/>
            <person name="Zhan M."/>
            <person name="Zhang G."/>
            <person name="Chissoe S."/>
            <person name="Murray J."/>
            <person name="Miller N."/>
            <person name="Minx P."/>
            <person name="Fulton R."/>
            <person name="Johnson D."/>
            <person name="Bemis G."/>
            <person name="Bentley D."/>
            <person name="Bradshaw H."/>
            <person name="Bourne S."/>
            <person name="Cordes M."/>
            <person name="Du Z."/>
            <person name="Fulton L."/>
            <person name="Goela D."/>
            <person name="Graves T."/>
            <person name="Hawkins J."/>
            <person name="Hinds K."/>
            <person name="Kemp K."/>
            <person name="Latreille P."/>
            <person name="Layman D."/>
            <person name="Ozersky P."/>
            <person name="Rohlfing T."/>
            <person name="Scheet P."/>
            <person name="Walker C."/>
            <person name="Wamsley A."/>
            <person name="Wohldmann P."/>
            <person name="Pepin K."/>
            <person name="Nelson J."/>
            <person name="Korf I."/>
            <person name="Bedell J.A."/>
            <person name="Hillier L.W."/>
            <person name="Mardis E."/>
            <person name="Waterston R."/>
            <person name="Wilson R."/>
            <person name="Emanuel B.S."/>
            <person name="Shaikh T."/>
            <person name="Kurahashi H."/>
            <person name="Saitta S."/>
            <person name="Budarf M.L."/>
            <person name="McDermid H.E."/>
            <person name="Johnson A."/>
            <person name="Wong A.C.C."/>
            <person name="Morrow B.E."/>
            <person name="Edelmann L."/>
            <person name="Kim U.J."/>
            <person name="Shizuya H."/>
            <person name="Simon M.I."/>
            <person name="Dumanski J.P."/>
            <person name="Peyrard M."/>
            <person name="Kedra D."/>
            <person name="Seroussi E."/>
            <person name="Fransson I."/>
            <person name="Tapia I."/>
            <person name="Bruder C.E."/>
            <person name="O'Brien K.P."/>
            <person name="Wilkinson P."/>
            <person name="Bodenteich A."/>
            <person name="Hartman K."/>
            <person name="Hu X."/>
            <person name="Khan A.S."/>
            <person name="Lane L."/>
            <person name="Tilahun Y."/>
            <person name="Wright H."/>
        </authorList>
    </citation>
    <scope>NUCLEOTIDE SEQUENCE [LARGE SCALE GENOMIC DNA]</scope>
</reference>
<sequence length="156" mass="17139">WASQVSENRPVCKAIIQGKQFEGLVDTGADVSIIALNQWPKNWPKQKAVTGLVGIGTASEVYQSTEILHCLGPDNQESTVQPMITSIPLNLWGRDLLQQWGAEITMPAPLYSPTSQKIMTKMGYIPGKGLGKNEDGIKIPFEAKINQKREGIGYPF</sequence>
<accession>P63129</accession>
<accession>Q9UKI1</accession>